<keyword id="KW-0150">Chloroplast</keyword>
<keyword id="KW-0934">Plastid</keyword>
<keyword id="KW-1185">Reference proteome</keyword>
<keyword id="KW-0687">Ribonucleoprotein</keyword>
<keyword id="KW-0689">Ribosomal protein</keyword>
<accession>Q2VEE6</accession>
<gene>
    <name evidence="1" type="primary">rpl36</name>
</gene>
<sequence length="37" mass="4460">MKIRASVRKICEKCRLIRRRGRIIVICSNPRHKQRQG</sequence>
<comment type="subcellular location">
    <subcellularLocation>
        <location>Plastid</location>
        <location>Chloroplast</location>
    </subcellularLocation>
</comment>
<comment type="similarity">
    <text evidence="1">Belongs to the bacterial ribosomal protein bL36 family.</text>
</comment>
<protein>
    <recommendedName>
        <fullName evidence="1">Large ribosomal subunit protein bL36c</fullName>
    </recommendedName>
    <alternativeName>
        <fullName evidence="2">50S ribosomal protein L36, chloroplastic</fullName>
    </alternativeName>
</protein>
<dbReference type="EMBL" id="DQ231562">
    <property type="protein sequence ID" value="ABB90073.1"/>
    <property type="molecule type" value="Genomic_DNA"/>
</dbReference>
<dbReference type="EMBL" id="DQ386163">
    <property type="protein sequence ID" value="ABD47090.1"/>
    <property type="molecule type" value="Genomic_DNA"/>
</dbReference>
<dbReference type="RefSeq" id="YP_635673.1">
    <property type="nucleotide sequence ID" value="NC_008096.2"/>
</dbReference>
<dbReference type="SMR" id="Q2VEE6"/>
<dbReference type="FunCoup" id="Q2VEE6">
    <property type="interactions" value="57"/>
</dbReference>
<dbReference type="STRING" id="4113.Q2VEE6"/>
<dbReference type="GeneID" id="4099878"/>
<dbReference type="KEGG" id="sot:4099878"/>
<dbReference type="InParanoid" id="Q2VEE6"/>
<dbReference type="Proteomes" id="UP000011115">
    <property type="component" value="Unassembled WGS sequence"/>
</dbReference>
<dbReference type="GO" id="GO:0009507">
    <property type="term" value="C:chloroplast"/>
    <property type="evidence" value="ECO:0007669"/>
    <property type="project" value="UniProtKB-SubCell"/>
</dbReference>
<dbReference type="GO" id="GO:1990904">
    <property type="term" value="C:ribonucleoprotein complex"/>
    <property type="evidence" value="ECO:0007669"/>
    <property type="project" value="UniProtKB-KW"/>
</dbReference>
<dbReference type="GO" id="GO:0005840">
    <property type="term" value="C:ribosome"/>
    <property type="evidence" value="ECO:0007669"/>
    <property type="project" value="UniProtKB-KW"/>
</dbReference>
<dbReference type="GO" id="GO:0003735">
    <property type="term" value="F:structural constituent of ribosome"/>
    <property type="evidence" value="ECO:0007669"/>
    <property type="project" value="InterPro"/>
</dbReference>
<dbReference type="GO" id="GO:0006412">
    <property type="term" value="P:translation"/>
    <property type="evidence" value="ECO:0007669"/>
    <property type="project" value="UniProtKB-UniRule"/>
</dbReference>
<dbReference type="HAMAP" id="MF_00251">
    <property type="entry name" value="Ribosomal_bL36"/>
    <property type="match status" value="1"/>
</dbReference>
<dbReference type="InterPro" id="IPR000473">
    <property type="entry name" value="Ribosomal_bL36"/>
</dbReference>
<dbReference type="InterPro" id="IPR035977">
    <property type="entry name" value="Ribosomal_bL36_sp"/>
</dbReference>
<dbReference type="NCBIfam" id="TIGR01022">
    <property type="entry name" value="rpmJ_bact"/>
    <property type="match status" value="1"/>
</dbReference>
<dbReference type="PANTHER" id="PTHR42888">
    <property type="entry name" value="50S RIBOSOMAL PROTEIN L36, CHLOROPLASTIC"/>
    <property type="match status" value="1"/>
</dbReference>
<dbReference type="PANTHER" id="PTHR42888:SF1">
    <property type="entry name" value="LARGE RIBOSOMAL SUBUNIT PROTEIN BL36C"/>
    <property type="match status" value="1"/>
</dbReference>
<dbReference type="Pfam" id="PF00444">
    <property type="entry name" value="Ribosomal_L36"/>
    <property type="match status" value="1"/>
</dbReference>
<dbReference type="SUPFAM" id="SSF57840">
    <property type="entry name" value="Ribosomal protein L36"/>
    <property type="match status" value="1"/>
</dbReference>
<dbReference type="PROSITE" id="PS00828">
    <property type="entry name" value="RIBOSOMAL_L36"/>
    <property type="match status" value="1"/>
</dbReference>
<name>RK36_SOLTU</name>
<geneLocation type="chloroplast"/>
<reference key="1">
    <citation type="journal article" date="2006" name="Plant Cell Rep.">
        <title>The complete chloroplast genome sequences of Solanum tuberosum and comparative analysis with Solanaceae species identified the presence of a 241-bp deletion in cultivated potato chloroplast DNA sequence.</title>
        <authorList>
            <person name="Chung H.-J."/>
            <person name="Jung J.D."/>
            <person name="Park H.-W."/>
            <person name="Kim J.-H."/>
            <person name="Cha H.W."/>
            <person name="Min S.R."/>
            <person name="Jeong W.-J."/>
            <person name="Liu J.R."/>
        </authorList>
    </citation>
    <scope>NUCLEOTIDE SEQUENCE [LARGE SCALE GENOMIC DNA]</scope>
    <source>
        <strain>cv. Desiree</strain>
    </source>
</reference>
<reference key="2">
    <citation type="submission" date="2006-02" db="EMBL/GenBank/DDBJ databases">
        <title>Complete chloroplast genome sequences of Solanum tuberosum cultivar Desiree and comparative analyses with other Solanaceae genomes.</title>
        <authorList>
            <person name="Gargano D."/>
            <person name="Scotti N."/>
            <person name="Vezzi A."/>
            <person name="Bilardi A."/>
            <person name="Valle G."/>
            <person name="Grillo S."/>
            <person name="Cardi T."/>
        </authorList>
    </citation>
    <scope>NUCLEOTIDE SEQUENCE [LARGE SCALE GENOMIC DNA]</scope>
    <source>
        <strain>cv. Desiree</strain>
    </source>
</reference>
<evidence type="ECO:0000255" key="1">
    <source>
        <dbReference type="HAMAP-Rule" id="MF_00251"/>
    </source>
</evidence>
<evidence type="ECO:0000305" key="2"/>
<proteinExistence type="inferred from homology"/>
<organism>
    <name type="scientific">Solanum tuberosum</name>
    <name type="common">Potato</name>
    <dbReference type="NCBI Taxonomy" id="4113"/>
    <lineage>
        <taxon>Eukaryota</taxon>
        <taxon>Viridiplantae</taxon>
        <taxon>Streptophyta</taxon>
        <taxon>Embryophyta</taxon>
        <taxon>Tracheophyta</taxon>
        <taxon>Spermatophyta</taxon>
        <taxon>Magnoliopsida</taxon>
        <taxon>eudicotyledons</taxon>
        <taxon>Gunneridae</taxon>
        <taxon>Pentapetalae</taxon>
        <taxon>asterids</taxon>
        <taxon>lamiids</taxon>
        <taxon>Solanales</taxon>
        <taxon>Solanaceae</taxon>
        <taxon>Solanoideae</taxon>
        <taxon>Solaneae</taxon>
        <taxon>Solanum</taxon>
    </lineage>
</organism>
<feature type="chain" id="PRO_0000276836" description="Large ribosomal subunit protein bL36c">
    <location>
        <begin position="1"/>
        <end position="37"/>
    </location>
</feature>